<proteinExistence type="predicted"/>
<accession>P07066</accession>
<keyword id="KW-0945">Host-virus interaction</keyword>
<keyword id="KW-1161">Viral attachment to host cell</keyword>
<keyword id="KW-1230">Viral tail fiber protein</keyword>
<keyword id="KW-1227">Viral tail protein</keyword>
<keyword id="KW-0946">Virion</keyword>
<keyword id="KW-1160">Virus entry into host cell</keyword>
<comment type="function">
    <text>Structural component of the distal-half tail fiber.</text>
</comment>
<comment type="subunit">
    <text>The distal half-fiber contains two molecules each of Gp36 and Gp37 and one molecule of Gp35.</text>
</comment>
<comment type="subcellular location">
    <subcellularLocation>
        <location evidence="1">Virion</location>
    </subcellularLocation>
</comment>
<gene>
    <name type="primary">36</name>
</gene>
<organismHost>
    <name type="scientific">Escherichia coli</name>
    <dbReference type="NCBI Taxonomy" id="562"/>
</organismHost>
<evidence type="ECO:0000305" key="1"/>
<protein>
    <recommendedName>
        <fullName>Tail fiber protein p36</fullName>
    </recommendedName>
    <alternativeName>
        <fullName>Protein Gp36</fullName>
    </alternativeName>
</protein>
<organism>
    <name type="scientific">Enterobacteria phage T2</name>
    <name type="common">Bacteriophage T2</name>
    <dbReference type="NCBI Taxonomy" id="2060721"/>
    <lineage>
        <taxon>Viruses</taxon>
        <taxon>Duplodnaviria</taxon>
        <taxon>Heunggongvirae</taxon>
        <taxon>Uroviricota</taxon>
        <taxon>Caudoviricetes</taxon>
        <taxon>Straboviridae</taxon>
        <taxon>Tevenvirinae</taxon>
        <taxon>Tequatrovirus</taxon>
        <taxon>Tequatrovirus T2</taxon>
    </lineage>
</organism>
<feature type="chain" id="PRO_0000165025" description="Tail fiber protein p36">
    <location>
        <begin position="1"/>
        <end position="219"/>
    </location>
</feature>
<name>VG36_BPT2</name>
<reference key="1">
    <citation type="journal article" date="1985" name="Nucleic Acids Res.">
        <title>The nucleotide sequences of the tail fiber gene 36 of bacteriophage T2 and of genes 36 of the T-even type Escherichia coli phages K3 and Ox2.</title>
        <authorList>
            <person name="Riede I."/>
            <person name="Drexler K."/>
            <person name="Eschbach M.-L."/>
        </authorList>
    </citation>
    <scope>NUCLEOTIDE SEQUENCE [GENOMIC DNA]</scope>
</reference>
<reference key="2">
    <citation type="submission" date="1985-11" db="EMBL/GenBank/DDBJ databases">
        <authorList>
            <person name="Riede I."/>
        </authorList>
    </citation>
    <scope>SEQUENCE REVISION</scope>
</reference>
<sequence length="219" mass="23488">MADLKVGSTTGGSVIWHQGNFPLNPAGDDVLYKSFKIYSEYNKPQAADNDLVSKANGGTYLNRVIFNRGIQVPGAGNGLTGMFVGPGDGATYDNVNLDIISWYGIGFKSSQGTGPRTIVFNVRDGEISARGNINSQRQVRAEAAAPIAANDLTRKDYVDGAINTVTANANSRVLRSGDTMTGNLTAPNFFSQNPASQPSHVPRFDQIVIKDSVQDFGYY</sequence>
<dbReference type="EMBL" id="X01755">
    <property type="protein sequence ID" value="CAA25897.1"/>
    <property type="molecule type" value="Genomic_DNA"/>
</dbReference>
<dbReference type="PIR" id="A23056">
    <property type="entry name" value="TLBPT2"/>
</dbReference>
<dbReference type="GO" id="GO:0098024">
    <property type="term" value="C:virus tail, fiber"/>
    <property type="evidence" value="ECO:0007669"/>
    <property type="project" value="UniProtKB-KW"/>
</dbReference>
<dbReference type="GO" id="GO:0046718">
    <property type="term" value="P:symbiont entry into host cell"/>
    <property type="evidence" value="ECO:0007669"/>
    <property type="project" value="UniProtKB-KW"/>
</dbReference>
<dbReference type="GO" id="GO:0019062">
    <property type="term" value="P:virion attachment to host cell"/>
    <property type="evidence" value="ECO:0007669"/>
    <property type="project" value="UniProtKB-KW"/>
</dbReference>
<dbReference type="InterPro" id="IPR005601">
    <property type="entry name" value="Tail_fibre_p36"/>
</dbReference>
<dbReference type="Pfam" id="PF03903">
    <property type="entry name" value="Phage_T4_gp36"/>
    <property type="match status" value="1"/>
</dbReference>